<keyword id="KW-0665">Pyrimidine biosynthesis</keyword>
<keyword id="KW-1185">Reference proteome</keyword>
<keyword id="KW-0808">Transferase</keyword>
<organism>
    <name type="scientific">Rhizobium meliloti (strain 1021)</name>
    <name type="common">Ensifer meliloti</name>
    <name type="synonym">Sinorhizobium meliloti</name>
    <dbReference type="NCBI Taxonomy" id="266834"/>
    <lineage>
        <taxon>Bacteria</taxon>
        <taxon>Pseudomonadati</taxon>
        <taxon>Pseudomonadota</taxon>
        <taxon>Alphaproteobacteria</taxon>
        <taxon>Hyphomicrobiales</taxon>
        <taxon>Rhizobiaceae</taxon>
        <taxon>Sinorhizobium/Ensifer group</taxon>
        <taxon>Sinorhizobium</taxon>
    </lineage>
</organism>
<protein>
    <recommendedName>
        <fullName evidence="1">Aspartate carbamoyltransferase catalytic subunit</fullName>
        <ecNumber evidence="1">2.1.3.2</ecNumber>
    </recommendedName>
    <alternativeName>
        <fullName evidence="1">Aspartate transcarbamylase</fullName>
        <shortName evidence="1">ATCase</shortName>
    </alternativeName>
</protein>
<comment type="function">
    <text evidence="1">Catalyzes the condensation of carbamoyl phosphate and aspartate to form carbamoyl aspartate and inorganic phosphate, the committed step in the de novo pyrimidine nucleotide biosynthesis pathway.</text>
</comment>
<comment type="catalytic activity">
    <reaction evidence="1">
        <text>carbamoyl phosphate + L-aspartate = N-carbamoyl-L-aspartate + phosphate + H(+)</text>
        <dbReference type="Rhea" id="RHEA:20013"/>
        <dbReference type="ChEBI" id="CHEBI:15378"/>
        <dbReference type="ChEBI" id="CHEBI:29991"/>
        <dbReference type="ChEBI" id="CHEBI:32814"/>
        <dbReference type="ChEBI" id="CHEBI:43474"/>
        <dbReference type="ChEBI" id="CHEBI:58228"/>
        <dbReference type="EC" id="2.1.3.2"/>
    </reaction>
</comment>
<comment type="pathway">
    <text evidence="1">Pyrimidine metabolism; UMP biosynthesis via de novo pathway; (S)-dihydroorotate from bicarbonate: step 2/3.</text>
</comment>
<comment type="subunit">
    <text evidence="1">Heterododecamer (2C3:3R2) of six catalytic PyrB chains organized as two trimers (C3), and six regulatory PyrI chains organized as three dimers (R2).</text>
</comment>
<comment type="similarity">
    <text evidence="1">Belongs to the aspartate/ornithine carbamoyltransferase superfamily. ATCase family.</text>
</comment>
<feature type="chain" id="PRO_0000113184" description="Aspartate carbamoyltransferase catalytic subunit">
    <location>
        <begin position="1"/>
        <end position="313"/>
    </location>
</feature>
<feature type="binding site" evidence="1">
    <location>
        <position position="59"/>
    </location>
    <ligand>
        <name>carbamoyl phosphate</name>
        <dbReference type="ChEBI" id="CHEBI:58228"/>
    </ligand>
</feature>
<feature type="binding site" evidence="1">
    <location>
        <position position="60"/>
    </location>
    <ligand>
        <name>carbamoyl phosphate</name>
        <dbReference type="ChEBI" id="CHEBI:58228"/>
    </ligand>
</feature>
<feature type="binding site" evidence="1">
    <location>
        <position position="87"/>
    </location>
    <ligand>
        <name>L-aspartate</name>
        <dbReference type="ChEBI" id="CHEBI:29991"/>
    </ligand>
</feature>
<feature type="binding site" evidence="1">
    <location>
        <position position="109"/>
    </location>
    <ligand>
        <name>carbamoyl phosphate</name>
        <dbReference type="ChEBI" id="CHEBI:58228"/>
    </ligand>
</feature>
<feature type="binding site" evidence="1">
    <location>
        <position position="137"/>
    </location>
    <ligand>
        <name>carbamoyl phosphate</name>
        <dbReference type="ChEBI" id="CHEBI:58228"/>
    </ligand>
</feature>
<feature type="binding site" evidence="1">
    <location>
        <position position="140"/>
    </location>
    <ligand>
        <name>carbamoyl phosphate</name>
        <dbReference type="ChEBI" id="CHEBI:58228"/>
    </ligand>
</feature>
<feature type="binding site" evidence="1">
    <location>
        <position position="170"/>
    </location>
    <ligand>
        <name>L-aspartate</name>
        <dbReference type="ChEBI" id="CHEBI:29991"/>
    </ligand>
</feature>
<feature type="binding site" evidence="1">
    <location>
        <position position="224"/>
    </location>
    <ligand>
        <name>L-aspartate</name>
        <dbReference type="ChEBI" id="CHEBI:29991"/>
    </ligand>
</feature>
<feature type="binding site" evidence="1">
    <location>
        <position position="265"/>
    </location>
    <ligand>
        <name>carbamoyl phosphate</name>
        <dbReference type="ChEBI" id="CHEBI:58228"/>
    </ligand>
</feature>
<feature type="binding site" evidence="1">
    <location>
        <position position="266"/>
    </location>
    <ligand>
        <name>carbamoyl phosphate</name>
        <dbReference type="ChEBI" id="CHEBI:58228"/>
    </ligand>
</feature>
<accession>Q92QL5</accession>
<sequence>MITFPHRHLLGIKGLTEQDITLLLDRADEAVKISRQREKKTSSLRGLTQINLFFEASTRTQSSFELAGKRLGADVMNMSVGNSSVKKGETLIDTAMTLNAMHPDVLVVRHSSAGAASLLAQKVSCSVVNAGDGQHEHPTQALLDALTIRRAKGKLSRIIVAICGDVLHSRVARSNILLLNQMGARVRVVAPATLLPAGIAEMGAEVYHSMAEGLKDADVVMMLRLQRERMAGSFVPSVREYFHYYGLDAEKLKVAKDDALVMHPGPMNRGVEIASEIADGPQSVIEQQVEMGVAVRMAVMETLLLSQNQGPRL</sequence>
<proteinExistence type="inferred from homology"/>
<gene>
    <name evidence="1" type="primary">pyrB</name>
    <name type="ordered locus">R01304</name>
    <name type="ORF">SMc01360</name>
</gene>
<dbReference type="EC" id="2.1.3.2" evidence="1"/>
<dbReference type="EMBL" id="AL591688">
    <property type="protein sequence ID" value="CAC45883.1"/>
    <property type="molecule type" value="Genomic_DNA"/>
</dbReference>
<dbReference type="RefSeq" id="NP_385410.1">
    <property type="nucleotide sequence ID" value="NC_003047.1"/>
</dbReference>
<dbReference type="RefSeq" id="WP_003533035.1">
    <property type="nucleotide sequence ID" value="NC_003047.1"/>
</dbReference>
<dbReference type="SMR" id="Q92QL5"/>
<dbReference type="EnsemblBacteria" id="CAC45883">
    <property type="protein sequence ID" value="CAC45883"/>
    <property type="gene ID" value="SMc01360"/>
</dbReference>
<dbReference type="KEGG" id="sme:SMc01360"/>
<dbReference type="PATRIC" id="fig|266834.11.peg.2718"/>
<dbReference type="eggNOG" id="COG0540">
    <property type="taxonomic scope" value="Bacteria"/>
</dbReference>
<dbReference type="HOGENOM" id="CLU_043846_2_0_5"/>
<dbReference type="OrthoDB" id="9774690at2"/>
<dbReference type="UniPathway" id="UPA00070">
    <property type="reaction ID" value="UER00116"/>
</dbReference>
<dbReference type="Proteomes" id="UP000001976">
    <property type="component" value="Chromosome"/>
</dbReference>
<dbReference type="GO" id="GO:0005829">
    <property type="term" value="C:cytosol"/>
    <property type="evidence" value="ECO:0007669"/>
    <property type="project" value="TreeGrafter"/>
</dbReference>
<dbReference type="GO" id="GO:0016597">
    <property type="term" value="F:amino acid binding"/>
    <property type="evidence" value="ECO:0007669"/>
    <property type="project" value="InterPro"/>
</dbReference>
<dbReference type="GO" id="GO:0004070">
    <property type="term" value="F:aspartate carbamoyltransferase activity"/>
    <property type="evidence" value="ECO:0007669"/>
    <property type="project" value="UniProtKB-UniRule"/>
</dbReference>
<dbReference type="GO" id="GO:0006207">
    <property type="term" value="P:'de novo' pyrimidine nucleobase biosynthetic process"/>
    <property type="evidence" value="ECO:0007669"/>
    <property type="project" value="InterPro"/>
</dbReference>
<dbReference type="GO" id="GO:0044205">
    <property type="term" value="P:'de novo' UMP biosynthetic process"/>
    <property type="evidence" value="ECO:0007669"/>
    <property type="project" value="UniProtKB-UniRule"/>
</dbReference>
<dbReference type="GO" id="GO:0006520">
    <property type="term" value="P:amino acid metabolic process"/>
    <property type="evidence" value="ECO:0007669"/>
    <property type="project" value="InterPro"/>
</dbReference>
<dbReference type="FunFam" id="3.40.50.1370:FF:000007">
    <property type="entry name" value="Aspartate carbamoyltransferase"/>
    <property type="match status" value="1"/>
</dbReference>
<dbReference type="Gene3D" id="3.40.50.1370">
    <property type="entry name" value="Aspartate/ornithine carbamoyltransferase"/>
    <property type="match status" value="2"/>
</dbReference>
<dbReference type="HAMAP" id="MF_00001">
    <property type="entry name" value="Asp_carb_tr"/>
    <property type="match status" value="1"/>
</dbReference>
<dbReference type="InterPro" id="IPR006132">
    <property type="entry name" value="Asp/Orn_carbamoyltranf_P-bd"/>
</dbReference>
<dbReference type="InterPro" id="IPR006130">
    <property type="entry name" value="Asp/Orn_carbamoylTrfase"/>
</dbReference>
<dbReference type="InterPro" id="IPR036901">
    <property type="entry name" value="Asp/Orn_carbamoylTrfase_sf"/>
</dbReference>
<dbReference type="InterPro" id="IPR002082">
    <property type="entry name" value="Asp_carbamoyltransf"/>
</dbReference>
<dbReference type="InterPro" id="IPR006131">
    <property type="entry name" value="Asp_carbamoyltransf_Asp/Orn-bd"/>
</dbReference>
<dbReference type="NCBIfam" id="TIGR00670">
    <property type="entry name" value="asp_carb_tr"/>
    <property type="match status" value="1"/>
</dbReference>
<dbReference type="NCBIfam" id="NF002032">
    <property type="entry name" value="PRK00856.1"/>
    <property type="match status" value="1"/>
</dbReference>
<dbReference type="PANTHER" id="PTHR45753:SF6">
    <property type="entry name" value="ASPARTATE CARBAMOYLTRANSFERASE"/>
    <property type="match status" value="1"/>
</dbReference>
<dbReference type="PANTHER" id="PTHR45753">
    <property type="entry name" value="ORNITHINE CARBAMOYLTRANSFERASE, MITOCHONDRIAL"/>
    <property type="match status" value="1"/>
</dbReference>
<dbReference type="Pfam" id="PF00185">
    <property type="entry name" value="OTCace"/>
    <property type="match status" value="1"/>
</dbReference>
<dbReference type="Pfam" id="PF02729">
    <property type="entry name" value="OTCace_N"/>
    <property type="match status" value="1"/>
</dbReference>
<dbReference type="PRINTS" id="PR00100">
    <property type="entry name" value="AOTCASE"/>
</dbReference>
<dbReference type="PRINTS" id="PR00101">
    <property type="entry name" value="ATCASE"/>
</dbReference>
<dbReference type="SUPFAM" id="SSF53671">
    <property type="entry name" value="Aspartate/ornithine carbamoyltransferase"/>
    <property type="match status" value="1"/>
</dbReference>
<dbReference type="PROSITE" id="PS00097">
    <property type="entry name" value="CARBAMOYLTRANSFERASE"/>
    <property type="match status" value="1"/>
</dbReference>
<evidence type="ECO:0000255" key="1">
    <source>
        <dbReference type="HAMAP-Rule" id="MF_00001"/>
    </source>
</evidence>
<name>PYRB_RHIME</name>
<reference key="1">
    <citation type="journal article" date="2001" name="Proc. Natl. Acad. Sci. U.S.A.">
        <title>Analysis of the chromosome sequence of the legume symbiont Sinorhizobium meliloti strain 1021.</title>
        <authorList>
            <person name="Capela D."/>
            <person name="Barloy-Hubler F."/>
            <person name="Gouzy J."/>
            <person name="Bothe G."/>
            <person name="Ampe F."/>
            <person name="Batut J."/>
            <person name="Boistard P."/>
            <person name="Becker A."/>
            <person name="Boutry M."/>
            <person name="Cadieu E."/>
            <person name="Dreano S."/>
            <person name="Gloux S."/>
            <person name="Godrie T."/>
            <person name="Goffeau A."/>
            <person name="Kahn D."/>
            <person name="Kiss E."/>
            <person name="Lelaure V."/>
            <person name="Masuy D."/>
            <person name="Pohl T."/>
            <person name="Portetelle D."/>
            <person name="Puehler A."/>
            <person name="Purnelle B."/>
            <person name="Ramsperger U."/>
            <person name="Renard C."/>
            <person name="Thebault P."/>
            <person name="Vandenbol M."/>
            <person name="Weidner S."/>
            <person name="Galibert F."/>
        </authorList>
    </citation>
    <scope>NUCLEOTIDE SEQUENCE [LARGE SCALE GENOMIC DNA]</scope>
    <source>
        <strain>1021</strain>
    </source>
</reference>
<reference key="2">
    <citation type="journal article" date="2001" name="Science">
        <title>The composite genome of the legume symbiont Sinorhizobium meliloti.</title>
        <authorList>
            <person name="Galibert F."/>
            <person name="Finan T.M."/>
            <person name="Long S.R."/>
            <person name="Puehler A."/>
            <person name="Abola P."/>
            <person name="Ampe F."/>
            <person name="Barloy-Hubler F."/>
            <person name="Barnett M.J."/>
            <person name="Becker A."/>
            <person name="Boistard P."/>
            <person name="Bothe G."/>
            <person name="Boutry M."/>
            <person name="Bowser L."/>
            <person name="Buhrmester J."/>
            <person name="Cadieu E."/>
            <person name="Capela D."/>
            <person name="Chain P."/>
            <person name="Cowie A."/>
            <person name="Davis R.W."/>
            <person name="Dreano S."/>
            <person name="Federspiel N.A."/>
            <person name="Fisher R.F."/>
            <person name="Gloux S."/>
            <person name="Godrie T."/>
            <person name="Goffeau A."/>
            <person name="Golding B."/>
            <person name="Gouzy J."/>
            <person name="Gurjal M."/>
            <person name="Hernandez-Lucas I."/>
            <person name="Hong A."/>
            <person name="Huizar L."/>
            <person name="Hyman R.W."/>
            <person name="Jones T."/>
            <person name="Kahn D."/>
            <person name="Kahn M.L."/>
            <person name="Kalman S."/>
            <person name="Keating D.H."/>
            <person name="Kiss E."/>
            <person name="Komp C."/>
            <person name="Lelaure V."/>
            <person name="Masuy D."/>
            <person name="Palm C."/>
            <person name="Peck M.C."/>
            <person name="Pohl T.M."/>
            <person name="Portetelle D."/>
            <person name="Purnelle B."/>
            <person name="Ramsperger U."/>
            <person name="Surzycki R."/>
            <person name="Thebault P."/>
            <person name="Vandenbol M."/>
            <person name="Vorhoelter F.J."/>
            <person name="Weidner S."/>
            <person name="Wells D.H."/>
            <person name="Wong K."/>
            <person name="Yeh K.-C."/>
            <person name="Batut J."/>
        </authorList>
    </citation>
    <scope>NUCLEOTIDE SEQUENCE [LARGE SCALE GENOMIC DNA]</scope>
    <source>
        <strain>1021</strain>
    </source>
</reference>